<name>HIS8_STRAW</name>
<gene>
    <name type="primary">hisC</name>
    <name type="synonym">hisC1</name>
    <name type="ordered locus">SAV_6154</name>
</gene>
<accession>Q82AA5</accession>
<organism>
    <name type="scientific">Streptomyces avermitilis (strain ATCC 31267 / DSM 46492 / JCM 5070 / NBRC 14893 / NCIMB 12804 / NRRL 8165 / MA-4680)</name>
    <dbReference type="NCBI Taxonomy" id="227882"/>
    <lineage>
        <taxon>Bacteria</taxon>
        <taxon>Bacillati</taxon>
        <taxon>Actinomycetota</taxon>
        <taxon>Actinomycetes</taxon>
        <taxon>Kitasatosporales</taxon>
        <taxon>Streptomycetaceae</taxon>
        <taxon>Streptomyces</taxon>
    </lineage>
</organism>
<protein>
    <recommendedName>
        <fullName>Histidinol-phosphate aminotransferase</fullName>
        <ecNumber>2.6.1.9</ecNumber>
    </recommendedName>
    <alternativeName>
        <fullName>Imidazole acetol-phosphate transaminase</fullName>
    </alternativeName>
</protein>
<evidence type="ECO:0000250" key="1"/>
<evidence type="ECO:0000256" key="2">
    <source>
        <dbReference type="SAM" id="MobiDB-lite"/>
    </source>
</evidence>
<evidence type="ECO:0000305" key="3"/>
<dbReference type="EC" id="2.6.1.9"/>
<dbReference type="EMBL" id="BA000030">
    <property type="protein sequence ID" value="BAC73865.1"/>
    <property type="molecule type" value="Genomic_DNA"/>
</dbReference>
<dbReference type="RefSeq" id="WP_010987555.1">
    <property type="nucleotide sequence ID" value="NZ_JZJK01000089.1"/>
</dbReference>
<dbReference type="SMR" id="Q82AA5"/>
<dbReference type="GeneID" id="41543231"/>
<dbReference type="KEGG" id="sma:SAVERM_6154"/>
<dbReference type="eggNOG" id="COG0079">
    <property type="taxonomic scope" value="Bacteria"/>
</dbReference>
<dbReference type="HOGENOM" id="CLU_017584_3_1_11"/>
<dbReference type="OrthoDB" id="9809616at2"/>
<dbReference type="UniPathway" id="UPA00031">
    <property type="reaction ID" value="UER00012"/>
</dbReference>
<dbReference type="Proteomes" id="UP000000428">
    <property type="component" value="Chromosome"/>
</dbReference>
<dbReference type="GO" id="GO:0004400">
    <property type="term" value="F:histidinol-phosphate transaminase activity"/>
    <property type="evidence" value="ECO:0007669"/>
    <property type="project" value="UniProtKB-UniRule"/>
</dbReference>
<dbReference type="GO" id="GO:0030170">
    <property type="term" value="F:pyridoxal phosphate binding"/>
    <property type="evidence" value="ECO:0007669"/>
    <property type="project" value="InterPro"/>
</dbReference>
<dbReference type="GO" id="GO:0000105">
    <property type="term" value="P:L-histidine biosynthetic process"/>
    <property type="evidence" value="ECO:0007669"/>
    <property type="project" value="UniProtKB-UniRule"/>
</dbReference>
<dbReference type="CDD" id="cd00609">
    <property type="entry name" value="AAT_like"/>
    <property type="match status" value="1"/>
</dbReference>
<dbReference type="Gene3D" id="3.90.1150.10">
    <property type="entry name" value="Aspartate Aminotransferase, domain 1"/>
    <property type="match status" value="1"/>
</dbReference>
<dbReference type="Gene3D" id="3.40.640.10">
    <property type="entry name" value="Type I PLP-dependent aspartate aminotransferase-like (Major domain)"/>
    <property type="match status" value="1"/>
</dbReference>
<dbReference type="HAMAP" id="MF_01023">
    <property type="entry name" value="HisC_aminotrans_2"/>
    <property type="match status" value="1"/>
</dbReference>
<dbReference type="InterPro" id="IPR001917">
    <property type="entry name" value="Aminotrans_II_pyridoxalP_BS"/>
</dbReference>
<dbReference type="InterPro" id="IPR004839">
    <property type="entry name" value="Aminotransferase_I/II_large"/>
</dbReference>
<dbReference type="InterPro" id="IPR005861">
    <property type="entry name" value="HisP_aminotrans"/>
</dbReference>
<dbReference type="InterPro" id="IPR015424">
    <property type="entry name" value="PyrdxlP-dep_Trfase"/>
</dbReference>
<dbReference type="InterPro" id="IPR015421">
    <property type="entry name" value="PyrdxlP-dep_Trfase_major"/>
</dbReference>
<dbReference type="InterPro" id="IPR015422">
    <property type="entry name" value="PyrdxlP-dep_Trfase_small"/>
</dbReference>
<dbReference type="NCBIfam" id="TIGR01141">
    <property type="entry name" value="hisC"/>
    <property type="match status" value="1"/>
</dbReference>
<dbReference type="NCBIfam" id="NF002877">
    <property type="entry name" value="PRK03317.1"/>
    <property type="match status" value="1"/>
</dbReference>
<dbReference type="PANTHER" id="PTHR42885:SF2">
    <property type="entry name" value="HISTIDINOL-PHOSPHATE AMINOTRANSFERASE"/>
    <property type="match status" value="1"/>
</dbReference>
<dbReference type="PANTHER" id="PTHR42885">
    <property type="entry name" value="HISTIDINOL-PHOSPHATE AMINOTRANSFERASE-RELATED"/>
    <property type="match status" value="1"/>
</dbReference>
<dbReference type="Pfam" id="PF00155">
    <property type="entry name" value="Aminotran_1_2"/>
    <property type="match status" value="1"/>
</dbReference>
<dbReference type="SUPFAM" id="SSF53383">
    <property type="entry name" value="PLP-dependent transferases"/>
    <property type="match status" value="1"/>
</dbReference>
<dbReference type="PROSITE" id="PS00599">
    <property type="entry name" value="AA_TRANSFER_CLASS_2"/>
    <property type="match status" value="1"/>
</dbReference>
<sequence length="369" mass="40311">MSFGIDDLPVRDELRGKSPYGAPQLDVPVRLNTNENPYPLPEPLVERIAERVREAARHLNRYPDRDAVELRTELATYLTNTGKHPVGIENVWAANGSNEVIQQLLQTFGGPGRTAIGFEPSYSMHALIARGTGTAWISGPRGEDFTIDLAAARQAIAESRPDVVFITTPNNPTGTAVPPETVLALYEAAQAVKPSMVVVDEAYIEFSHGDSLLPLLEGRPHLVVSRTMSKAFGAAGLRLGYLAAHPAVVDAVQLVRLPYHLSAITQATALAALEHTDTLLGYVEQLKAERDRLVAELRAIGYDVTESDANFVQFGRFADAHEVWQQILDRGVLVRDNGVPGWLRVSAGTPEENDAFLDAVRELKKEQNA</sequence>
<reference key="1">
    <citation type="journal article" date="2001" name="Proc. Natl. Acad. Sci. U.S.A.">
        <title>Genome sequence of an industrial microorganism Streptomyces avermitilis: deducing the ability of producing secondary metabolites.</title>
        <authorList>
            <person name="Omura S."/>
            <person name="Ikeda H."/>
            <person name="Ishikawa J."/>
            <person name="Hanamoto A."/>
            <person name="Takahashi C."/>
            <person name="Shinose M."/>
            <person name="Takahashi Y."/>
            <person name="Horikawa H."/>
            <person name="Nakazawa H."/>
            <person name="Osonoe T."/>
            <person name="Kikuchi H."/>
            <person name="Shiba T."/>
            <person name="Sakaki Y."/>
            <person name="Hattori M."/>
        </authorList>
    </citation>
    <scope>NUCLEOTIDE SEQUENCE [LARGE SCALE GENOMIC DNA]</scope>
    <source>
        <strain>ATCC 31267 / DSM 46492 / JCM 5070 / NBRC 14893 / NCIMB 12804 / NRRL 8165 / MA-4680</strain>
    </source>
</reference>
<reference key="2">
    <citation type="journal article" date="2003" name="Nat. Biotechnol.">
        <title>Complete genome sequence and comparative analysis of the industrial microorganism Streptomyces avermitilis.</title>
        <authorList>
            <person name="Ikeda H."/>
            <person name="Ishikawa J."/>
            <person name="Hanamoto A."/>
            <person name="Shinose M."/>
            <person name="Kikuchi H."/>
            <person name="Shiba T."/>
            <person name="Sakaki Y."/>
            <person name="Hattori M."/>
            <person name="Omura S."/>
        </authorList>
    </citation>
    <scope>NUCLEOTIDE SEQUENCE [LARGE SCALE GENOMIC DNA]</scope>
    <source>
        <strain>ATCC 31267 / DSM 46492 / JCM 5070 / NBRC 14893 / NCIMB 12804 / NRRL 8165 / MA-4680</strain>
    </source>
</reference>
<keyword id="KW-0028">Amino-acid biosynthesis</keyword>
<keyword id="KW-0032">Aminotransferase</keyword>
<keyword id="KW-0368">Histidine biosynthesis</keyword>
<keyword id="KW-0663">Pyridoxal phosphate</keyword>
<keyword id="KW-1185">Reference proteome</keyword>
<keyword id="KW-0808">Transferase</keyword>
<feature type="chain" id="PRO_0000153462" description="Histidinol-phosphate aminotransferase">
    <location>
        <begin position="1"/>
        <end position="369"/>
    </location>
</feature>
<feature type="region of interest" description="Disordered" evidence="2">
    <location>
        <begin position="1"/>
        <end position="39"/>
    </location>
</feature>
<feature type="modified residue" description="N6-(pyridoxal phosphate)lysine" evidence="1">
    <location>
        <position position="230"/>
    </location>
</feature>
<proteinExistence type="inferred from homology"/>
<comment type="catalytic activity">
    <reaction>
        <text>L-histidinol phosphate + 2-oxoglutarate = 3-(imidazol-4-yl)-2-oxopropyl phosphate + L-glutamate</text>
        <dbReference type="Rhea" id="RHEA:23744"/>
        <dbReference type="ChEBI" id="CHEBI:16810"/>
        <dbReference type="ChEBI" id="CHEBI:29985"/>
        <dbReference type="ChEBI" id="CHEBI:57766"/>
        <dbReference type="ChEBI" id="CHEBI:57980"/>
        <dbReference type="EC" id="2.6.1.9"/>
    </reaction>
</comment>
<comment type="cofactor">
    <cofactor evidence="1">
        <name>pyridoxal 5'-phosphate</name>
        <dbReference type="ChEBI" id="CHEBI:597326"/>
    </cofactor>
</comment>
<comment type="pathway">
    <text>Amino-acid biosynthesis; L-histidine biosynthesis; L-histidine from 5-phospho-alpha-D-ribose 1-diphosphate: step 7/9.</text>
</comment>
<comment type="subunit">
    <text evidence="1">Homodimer.</text>
</comment>
<comment type="similarity">
    <text evidence="3">Belongs to the class-II pyridoxal-phosphate-dependent aminotransferase family. Histidinol-phosphate aminotransferase subfamily.</text>
</comment>